<reference key="1">
    <citation type="journal article" date="2007" name="PLoS Genet.">
        <title>The complete genome sequence of Yersinia pseudotuberculosis IP31758, the causative agent of Far East scarlet-like fever.</title>
        <authorList>
            <person name="Eppinger M."/>
            <person name="Rosovitz M.J."/>
            <person name="Fricke W.F."/>
            <person name="Rasko D.A."/>
            <person name="Kokorina G."/>
            <person name="Fayolle C."/>
            <person name="Lindler L.E."/>
            <person name="Carniel E."/>
            <person name="Ravel J."/>
        </authorList>
    </citation>
    <scope>NUCLEOTIDE SEQUENCE [LARGE SCALE GENOMIC DNA]</scope>
    <source>
        <strain>IP 31758</strain>
    </source>
</reference>
<feature type="chain" id="PRO_1000164344" description="tRNA(Ile)-lysidine synthase">
    <location>
        <begin position="1"/>
        <end position="451"/>
    </location>
</feature>
<feature type="binding site" evidence="1">
    <location>
        <begin position="21"/>
        <end position="26"/>
    </location>
    <ligand>
        <name>ATP</name>
        <dbReference type="ChEBI" id="CHEBI:30616"/>
    </ligand>
</feature>
<organism>
    <name type="scientific">Yersinia pseudotuberculosis serotype O:1b (strain IP 31758)</name>
    <dbReference type="NCBI Taxonomy" id="349747"/>
    <lineage>
        <taxon>Bacteria</taxon>
        <taxon>Pseudomonadati</taxon>
        <taxon>Pseudomonadota</taxon>
        <taxon>Gammaproteobacteria</taxon>
        <taxon>Enterobacterales</taxon>
        <taxon>Yersiniaceae</taxon>
        <taxon>Yersinia</taxon>
    </lineage>
</organism>
<evidence type="ECO:0000255" key="1">
    <source>
        <dbReference type="HAMAP-Rule" id="MF_01161"/>
    </source>
</evidence>
<name>TILS_YERP3</name>
<proteinExistence type="inferred from homology"/>
<protein>
    <recommendedName>
        <fullName evidence="1">tRNA(Ile)-lysidine synthase</fullName>
        <ecNumber evidence="1">6.3.4.19</ecNumber>
    </recommendedName>
    <alternativeName>
        <fullName evidence="1">tRNA(Ile)-2-lysyl-cytidine synthase</fullName>
    </alternativeName>
    <alternativeName>
        <fullName evidence="1">tRNA(Ile)-lysidine synthetase</fullName>
    </alternativeName>
</protein>
<gene>
    <name evidence="1" type="primary">tilS</name>
    <name type="ordered locus">YpsIP31758_1031</name>
</gene>
<sequence length="451" mass="50785">MLLNPLFAQLGENRHVLVGFSGGLDSTVLLHLLVCLRQQLIPELNIRAIHIHHGLNPQADSWVKHCMQQCDQWKIELKVVRVNIDPRQNGIEAAARTARYQAFSANLAAKEVLLTAQHLDDQCETFLLALKRGSGPAGLSAMAAKMPFAHSQLLRPLLAFSREILENYAQAQQLQWIEDDSNQDDRFDRNFLRLNVLPILNQRWPHFAQATARSAGLCAEQEQLLDELLAENLQQLQGPDRSLSIDGLLQASMAKRAAILRRWLASLGAPMPSQSQLQRLWLEVAMARQDAEPQLMIGTRQVRRFRQHLYLLMPLAEITTNYLPWATVKATPNSSIIPLLPEPLWLPADLGVLRFVSAGGQAVRPATVGEEISVRFGLQGDIKIVGRHHSRQSKKVWQELGIPPWQRERIPLLYFGEQLIAAAGVFVTQAGQANENEPCWHLDWDKQLKLG</sequence>
<dbReference type="EC" id="6.3.4.19" evidence="1"/>
<dbReference type="EMBL" id="CP000720">
    <property type="protein sequence ID" value="ABS46301.1"/>
    <property type="molecule type" value="Genomic_DNA"/>
</dbReference>
<dbReference type="SMR" id="A7FFI7"/>
<dbReference type="KEGG" id="ypi:YpsIP31758_1031"/>
<dbReference type="HOGENOM" id="CLU_018869_2_0_6"/>
<dbReference type="Proteomes" id="UP000002412">
    <property type="component" value="Chromosome"/>
</dbReference>
<dbReference type="GO" id="GO:0005737">
    <property type="term" value="C:cytoplasm"/>
    <property type="evidence" value="ECO:0007669"/>
    <property type="project" value="UniProtKB-SubCell"/>
</dbReference>
<dbReference type="GO" id="GO:0005524">
    <property type="term" value="F:ATP binding"/>
    <property type="evidence" value="ECO:0007669"/>
    <property type="project" value="UniProtKB-UniRule"/>
</dbReference>
<dbReference type="GO" id="GO:0032267">
    <property type="term" value="F:tRNA(Ile)-lysidine synthase activity"/>
    <property type="evidence" value="ECO:0007669"/>
    <property type="project" value="UniProtKB-EC"/>
</dbReference>
<dbReference type="GO" id="GO:0006400">
    <property type="term" value="P:tRNA modification"/>
    <property type="evidence" value="ECO:0007669"/>
    <property type="project" value="UniProtKB-UniRule"/>
</dbReference>
<dbReference type="CDD" id="cd01992">
    <property type="entry name" value="TilS_N"/>
    <property type="match status" value="1"/>
</dbReference>
<dbReference type="Gene3D" id="1.20.59.20">
    <property type="match status" value="1"/>
</dbReference>
<dbReference type="Gene3D" id="3.40.50.620">
    <property type="entry name" value="HUPs"/>
    <property type="match status" value="1"/>
</dbReference>
<dbReference type="HAMAP" id="MF_01161">
    <property type="entry name" value="tRNA_Ile_lys_synt"/>
    <property type="match status" value="1"/>
</dbReference>
<dbReference type="InterPro" id="IPR012796">
    <property type="entry name" value="Lysidine-tRNA-synth_C"/>
</dbReference>
<dbReference type="InterPro" id="IPR014729">
    <property type="entry name" value="Rossmann-like_a/b/a_fold"/>
</dbReference>
<dbReference type="InterPro" id="IPR011063">
    <property type="entry name" value="TilS/TtcA_N"/>
</dbReference>
<dbReference type="InterPro" id="IPR012094">
    <property type="entry name" value="tRNA_Ile_lys_synt"/>
</dbReference>
<dbReference type="InterPro" id="IPR012795">
    <property type="entry name" value="tRNA_Ile_lys_synt_N"/>
</dbReference>
<dbReference type="InterPro" id="IPR015262">
    <property type="entry name" value="tRNA_Ile_lys_synt_subst-bd"/>
</dbReference>
<dbReference type="NCBIfam" id="TIGR02433">
    <property type="entry name" value="lysidine_TilS_C"/>
    <property type="match status" value="1"/>
</dbReference>
<dbReference type="NCBIfam" id="TIGR02432">
    <property type="entry name" value="lysidine_TilS_N"/>
    <property type="match status" value="1"/>
</dbReference>
<dbReference type="NCBIfam" id="NF007942">
    <property type="entry name" value="PRK10660.1"/>
    <property type="match status" value="1"/>
</dbReference>
<dbReference type="PANTHER" id="PTHR43033">
    <property type="entry name" value="TRNA(ILE)-LYSIDINE SYNTHASE-RELATED"/>
    <property type="match status" value="1"/>
</dbReference>
<dbReference type="PANTHER" id="PTHR43033:SF1">
    <property type="entry name" value="TRNA(ILE)-LYSIDINE SYNTHASE-RELATED"/>
    <property type="match status" value="1"/>
</dbReference>
<dbReference type="Pfam" id="PF01171">
    <property type="entry name" value="ATP_bind_3"/>
    <property type="match status" value="1"/>
</dbReference>
<dbReference type="Pfam" id="PF09179">
    <property type="entry name" value="TilS"/>
    <property type="match status" value="1"/>
</dbReference>
<dbReference type="Pfam" id="PF11734">
    <property type="entry name" value="TilS_C"/>
    <property type="match status" value="1"/>
</dbReference>
<dbReference type="SMART" id="SM00977">
    <property type="entry name" value="TilS_C"/>
    <property type="match status" value="1"/>
</dbReference>
<dbReference type="SUPFAM" id="SSF52402">
    <property type="entry name" value="Adenine nucleotide alpha hydrolases-like"/>
    <property type="match status" value="1"/>
</dbReference>
<dbReference type="SUPFAM" id="SSF82829">
    <property type="entry name" value="MesJ substrate recognition domain-like"/>
    <property type="match status" value="1"/>
</dbReference>
<dbReference type="SUPFAM" id="SSF56037">
    <property type="entry name" value="PheT/TilS domain"/>
    <property type="match status" value="1"/>
</dbReference>
<accession>A7FFI7</accession>
<keyword id="KW-0067">ATP-binding</keyword>
<keyword id="KW-0963">Cytoplasm</keyword>
<keyword id="KW-0436">Ligase</keyword>
<keyword id="KW-0547">Nucleotide-binding</keyword>
<keyword id="KW-0819">tRNA processing</keyword>
<comment type="function">
    <text evidence="1">Ligates lysine onto the cytidine present at position 34 of the AUA codon-specific tRNA(Ile) that contains the anticodon CAU, in an ATP-dependent manner. Cytidine is converted to lysidine, thus changing the amino acid specificity of the tRNA from methionine to isoleucine.</text>
</comment>
<comment type="catalytic activity">
    <reaction evidence="1">
        <text>cytidine(34) in tRNA(Ile2) + L-lysine + ATP = lysidine(34) in tRNA(Ile2) + AMP + diphosphate + H(+)</text>
        <dbReference type="Rhea" id="RHEA:43744"/>
        <dbReference type="Rhea" id="RHEA-COMP:10625"/>
        <dbReference type="Rhea" id="RHEA-COMP:10670"/>
        <dbReference type="ChEBI" id="CHEBI:15378"/>
        <dbReference type="ChEBI" id="CHEBI:30616"/>
        <dbReference type="ChEBI" id="CHEBI:32551"/>
        <dbReference type="ChEBI" id="CHEBI:33019"/>
        <dbReference type="ChEBI" id="CHEBI:82748"/>
        <dbReference type="ChEBI" id="CHEBI:83665"/>
        <dbReference type="ChEBI" id="CHEBI:456215"/>
        <dbReference type="EC" id="6.3.4.19"/>
    </reaction>
</comment>
<comment type="subcellular location">
    <subcellularLocation>
        <location evidence="1">Cytoplasm</location>
    </subcellularLocation>
</comment>
<comment type="domain">
    <text>The N-terminal region contains the highly conserved SGGXDS motif, predicted to be a P-loop motif involved in ATP binding.</text>
</comment>
<comment type="similarity">
    <text evidence="1">Belongs to the tRNA(Ile)-lysidine synthase family.</text>
</comment>